<protein>
    <recommendedName>
        <fullName evidence="1">Ribosome maturation factor RimP</fullName>
    </recommendedName>
</protein>
<organism>
    <name type="scientific">Vibrio atlanticus (strain LGP32)</name>
    <name type="common">Vibrio splendidus (strain Mel32)</name>
    <dbReference type="NCBI Taxonomy" id="575788"/>
    <lineage>
        <taxon>Bacteria</taxon>
        <taxon>Pseudomonadati</taxon>
        <taxon>Pseudomonadota</taxon>
        <taxon>Gammaproteobacteria</taxon>
        <taxon>Vibrionales</taxon>
        <taxon>Vibrionaceae</taxon>
        <taxon>Vibrio</taxon>
    </lineage>
</organism>
<feature type="chain" id="PRO_1000149812" description="Ribosome maturation factor RimP">
    <location>
        <begin position="1"/>
        <end position="151"/>
    </location>
</feature>
<name>RIMP_VIBA3</name>
<reference key="1">
    <citation type="submission" date="2009-02" db="EMBL/GenBank/DDBJ databases">
        <title>Vibrio splendidus str. LGP32 complete genome.</title>
        <authorList>
            <person name="Mazel D."/>
            <person name="Le Roux F."/>
        </authorList>
    </citation>
    <scope>NUCLEOTIDE SEQUENCE [LARGE SCALE GENOMIC DNA]</scope>
    <source>
        <strain>LGP32</strain>
    </source>
</reference>
<dbReference type="EMBL" id="FM954972">
    <property type="protein sequence ID" value="CAV19643.1"/>
    <property type="molecule type" value="Genomic_DNA"/>
</dbReference>
<dbReference type="SMR" id="B7VJH9"/>
<dbReference type="STRING" id="575788.VS_2484"/>
<dbReference type="KEGG" id="vsp:VS_2484"/>
<dbReference type="eggNOG" id="COG0779">
    <property type="taxonomic scope" value="Bacteria"/>
</dbReference>
<dbReference type="HOGENOM" id="CLU_070525_1_1_6"/>
<dbReference type="Proteomes" id="UP000009100">
    <property type="component" value="Chromosome 1"/>
</dbReference>
<dbReference type="GO" id="GO:0005829">
    <property type="term" value="C:cytosol"/>
    <property type="evidence" value="ECO:0007669"/>
    <property type="project" value="TreeGrafter"/>
</dbReference>
<dbReference type="GO" id="GO:0000028">
    <property type="term" value="P:ribosomal small subunit assembly"/>
    <property type="evidence" value="ECO:0007669"/>
    <property type="project" value="TreeGrafter"/>
</dbReference>
<dbReference type="GO" id="GO:0006412">
    <property type="term" value="P:translation"/>
    <property type="evidence" value="ECO:0007669"/>
    <property type="project" value="TreeGrafter"/>
</dbReference>
<dbReference type="CDD" id="cd01734">
    <property type="entry name" value="YlxS_C"/>
    <property type="match status" value="1"/>
</dbReference>
<dbReference type="FunFam" id="2.30.30.180:FF:000001">
    <property type="entry name" value="Ribosome maturation factor RimP"/>
    <property type="match status" value="1"/>
</dbReference>
<dbReference type="FunFam" id="3.30.300.70:FF:000001">
    <property type="entry name" value="Ribosome maturation factor RimP"/>
    <property type="match status" value="1"/>
</dbReference>
<dbReference type="Gene3D" id="2.30.30.180">
    <property type="entry name" value="Ribosome maturation factor RimP, C-terminal domain"/>
    <property type="match status" value="1"/>
</dbReference>
<dbReference type="Gene3D" id="3.30.300.70">
    <property type="entry name" value="RimP-like superfamily, N-terminal"/>
    <property type="match status" value="1"/>
</dbReference>
<dbReference type="HAMAP" id="MF_01077">
    <property type="entry name" value="RimP"/>
    <property type="match status" value="1"/>
</dbReference>
<dbReference type="InterPro" id="IPR003728">
    <property type="entry name" value="Ribosome_maturation_RimP"/>
</dbReference>
<dbReference type="InterPro" id="IPR028998">
    <property type="entry name" value="RimP_C"/>
</dbReference>
<dbReference type="InterPro" id="IPR036847">
    <property type="entry name" value="RimP_C_sf"/>
</dbReference>
<dbReference type="InterPro" id="IPR028989">
    <property type="entry name" value="RimP_N"/>
</dbReference>
<dbReference type="InterPro" id="IPR035956">
    <property type="entry name" value="RimP_N_sf"/>
</dbReference>
<dbReference type="NCBIfam" id="NF000927">
    <property type="entry name" value="PRK00092.1-1"/>
    <property type="match status" value="1"/>
</dbReference>
<dbReference type="PANTHER" id="PTHR33867">
    <property type="entry name" value="RIBOSOME MATURATION FACTOR RIMP"/>
    <property type="match status" value="1"/>
</dbReference>
<dbReference type="PANTHER" id="PTHR33867:SF1">
    <property type="entry name" value="RIBOSOME MATURATION FACTOR RIMP"/>
    <property type="match status" value="1"/>
</dbReference>
<dbReference type="Pfam" id="PF17384">
    <property type="entry name" value="DUF150_C"/>
    <property type="match status" value="1"/>
</dbReference>
<dbReference type="Pfam" id="PF02576">
    <property type="entry name" value="RimP_N"/>
    <property type="match status" value="1"/>
</dbReference>
<dbReference type="SUPFAM" id="SSF74942">
    <property type="entry name" value="YhbC-like, C-terminal domain"/>
    <property type="match status" value="1"/>
</dbReference>
<dbReference type="SUPFAM" id="SSF75420">
    <property type="entry name" value="YhbC-like, N-terminal domain"/>
    <property type="match status" value="1"/>
</dbReference>
<keyword id="KW-0963">Cytoplasm</keyword>
<keyword id="KW-0690">Ribosome biogenesis</keyword>
<evidence type="ECO:0000255" key="1">
    <source>
        <dbReference type="HAMAP-Rule" id="MF_01077"/>
    </source>
</evidence>
<proteinExistence type="inferred from homology"/>
<sequence>MTGLERQLTEMLDAPVAASGYELVGLEFIRAGEHSTLRIYIDSPNGINVDDCSEVSHQVSAVMDVEDPISVAYNLEVSSPGLERPLFKAEHYQQFIGHEVSIVLKMAVGNRRKWKGDIQSIEGETVKVLVEGQEEEFVLSNIAKANLIPKF</sequence>
<gene>
    <name evidence="1" type="primary">rimP</name>
    <name type="ordered locus">VS_2484</name>
</gene>
<accession>B7VJH9</accession>
<comment type="function">
    <text evidence="1">Required for maturation of 30S ribosomal subunits.</text>
</comment>
<comment type="subcellular location">
    <subcellularLocation>
        <location evidence="1">Cytoplasm</location>
    </subcellularLocation>
</comment>
<comment type="similarity">
    <text evidence="1">Belongs to the RimP family.</text>
</comment>